<organism>
    <name type="scientific">African swine fever virus (isolate Warthog/Namibia/Wart80/1980)</name>
    <name type="common">ASFV</name>
    <dbReference type="NCBI Taxonomy" id="561444"/>
    <lineage>
        <taxon>Viruses</taxon>
        <taxon>Varidnaviria</taxon>
        <taxon>Bamfordvirae</taxon>
        <taxon>Nucleocytoviricota</taxon>
        <taxon>Pokkesviricetes</taxon>
        <taxon>Asfuvirales</taxon>
        <taxon>Asfarviridae</taxon>
        <taxon>Asfivirus</taxon>
        <taxon>African swine fever virus</taxon>
    </lineage>
</organism>
<gene>
    <name type="ordered locus">War-037</name>
</gene>
<feature type="chain" id="PRO_0000373326" description="Protein MGF 505-3R">
    <location>
        <begin position="1"/>
        <end position="280"/>
    </location>
</feature>
<sequence>MSSSLQELCRKKLPDCILPEFFDDYVLQLLGLHWQDHGSLQRIEKNQILVQQEPIHINEALKVAASEGNYEIVELLLSWEADPRYAVVGALESKYYDLVHKYYGQVKDCHDILPLIQNPETFEKCHELNSTCSLKCLFKHAVMNDMLPILEKYTDYLDRWEYCSQMLFELACRKKKYEMVVWIEGVLGVGKVTSLFTIAISNRDLQLYSLGFSIILEKLYSCGQDPTFLLNHFLRDVSIKGLLPFVLKTIEYGGSKEIAITLAKKYQHKHILKYFETWES</sequence>
<comment type="function">
    <text evidence="1">Plays a role in virus cell tropism, and may be required for efficient virus replication in macrophages.</text>
</comment>
<comment type="induction">
    <text evidence="2">Expressed in the early phase of the viral replicative cycle.</text>
</comment>
<comment type="similarity">
    <text evidence="2">Belongs to the asfivirus MGF 505 family.</text>
</comment>
<organismHost>
    <name type="scientific">Ornithodoros</name>
    <name type="common">relapsing fever ticks</name>
    <dbReference type="NCBI Taxonomy" id="6937"/>
</organismHost>
<organismHost>
    <name type="scientific">Phacochoerus aethiopicus</name>
    <name type="common">Warthog</name>
    <dbReference type="NCBI Taxonomy" id="85517"/>
</organismHost>
<organismHost>
    <name type="scientific">Phacochoerus africanus</name>
    <name type="common">Warthog</name>
    <dbReference type="NCBI Taxonomy" id="41426"/>
</organismHost>
<organismHost>
    <name type="scientific">Potamochoerus larvatus</name>
    <name type="common">Bushpig</name>
    <dbReference type="NCBI Taxonomy" id="273792"/>
</organismHost>
<organismHost>
    <name type="scientific">Sus scrofa</name>
    <name type="common">Pig</name>
    <dbReference type="NCBI Taxonomy" id="9823"/>
</organismHost>
<reference key="1">
    <citation type="submission" date="2003-03" db="EMBL/GenBank/DDBJ databases">
        <title>African swine fever virus genomes.</title>
        <authorList>
            <person name="Kutish G.F."/>
            <person name="Rock D.L."/>
        </authorList>
    </citation>
    <scope>NUCLEOTIDE SEQUENCE [LARGE SCALE GENOMIC DNA]</scope>
</reference>
<accession>P0C9T1</accession>
<name>5053R_ASFWA</name>
<protein>
    <recommendedName>
        <fullName>Protein MGF 505-3R</fullName>
    </recommendedName>
</protein>
<dbReference type="EMBL" id="AY261366">
    <property type="status" value="NOT_ANNOTATED_CDS"/>
    <property type="molecule type" value="Genomic_DNA"/>
</dbReference>
<dbReference type="SMR" id="P0C9T1"/>
<dbReference type="Proteomes" id="UP000000858">
    <property type="component" value="Segment"/>
</dbReference>
<dbReference type="InterPro" id="IPR004858">
    <property type="entry name" value="MGF_505"/>
</dbReference>
<dbReference type="Pfam" id="PF03158">
    <property type="entry name" value="DUF249"/>
    <property type="match status" value="1"/>
</dbReference>
<keyword id="KW-0244">Early protein</keyword>
<evidence type="ECO:0000250" key="1">
    <source>
        <dbReference type="UniProtKB" id="Q89642"/>
    </source>
</evidence>
<evidence type="ECO:0000305" key="2"/>
<proteinExistence type="inferred from homology"/>